<evidence type="ECO:0000255" key="1">
    <source>
        <dbReference type="PROSITE-ProRule" id="PRU00686"/>
    </source>
</evidence>
<evidence type="ECO:0000269" key="2">
    <source>
    </source>
</evidence>
<evidence type="ECO:0000269" key="3">
    <source>
    </source>
</evidence>
<evidence type="ECO:0000305" key="4"/>
<evidence type="ECO:0007829" key="5">
    <source>
        <dbReference type="PDB" id="1YKA"/>
    </source>
</evidence>
<evidence type="ECO:0007829" key="6">
    <source>
        <dbReference type="PDB" id="2WCI"/>
    </source>
</evidence>
<keyword id="KW-0001">2Fe-2S</keyword>
<keyword id="KW-0002">3D-structure</keyword>
<keyword id="KW-0963">Cytoplasm</keyword>
<keyword id="KW-0408">Iron</keyword>
<keyword id="KW-0411">Iron-sulfur</keyword>
<keyword id="KW-0479">Metal-binding</keyword>
<keyword id="KW-0676">Redox-active center</keyword>
<keyword id="KW-1185">Reference proteome</keyword>
<feature type="chain" id="PRO_0000102257" description="Glutaredoxin 4">
    <location>
        <begin position="1"/>
        <end position="115"/>
    </location>
</feature>
<feature type="domain" description="Glutaredoxin" evidence="1">
    <location>
        <begin position="5"/>
        <end position="107"/>
    </location>
</feature>
<feature type="binding site" evidence="3">
    <location>
        <position position="22"/>
    </location>
    <ligand>
        <name>glutathione</name>
        <dbReference type="ChEBI" id="CHEBI:57925"/>
    </ligand>
</feature>
<feature type="binding site">
    <location>
        <position position="30"/>
    </location>
    <ligand>
        <name>[2Fe-2S] cluster</name>
        <dbReference type="ChEBI" id="CHEBI:190135"/>
        <note>ligand shared between dimeric partners</note>
    </ligand>
</feature>
<feature type="binding site" evidence="3">
    <location>
        <position position="59"/>
    </location>
    <ligand>
        <name>glutathione</name>
        <dbReference type="ChEBI" id="CHEBI:57925"/>
    </ligand>
</feature>
<feature type="binding site" evidence="3">
    <location>
        <position position="71"/>
    </location>
    <ligand>
        <name>glutathione</name>
        <dbReference type="ChEBI" id="CHEBI:57925"/>
    </ligand>
</feature>
<feature type="binding site">
    <location>
        <begin position="84"/>
        <end position="85"/>
    </location>
    <ligand>
        <name>glutathione</name>
        <dbReference type="ChEBI" id="CHEBI:57925"/>
    </ligand>
</feature>
<feature type="helix" evidence="6">
    <location>
        <begin position="3"/>
        <end position="14"/>
    </location>
</feature>
<feature type="strand" evidence="6">
    <location>
        <begin position="16"/>
        <end position="23"/>
    </location>
</feature>
<feature type="strand" evidence="6">
    <location>
        <begin position="25"/>
        <end position="30"/>
    </location>
</feature>
<feature type="helix" evidence="6">
    <location>
        <begin position="31"/>
        <end position="41"/>
    </location>
</feature>
<feature type="strand" evidence="6">
    <location>
        <begin position="48"/>
        <end position="51"/>
    </location>
</feature>
<feature type="helix" evidence="6">
    <location>
        <begin position="52"/>
        <end position="54"/>
    </location>
</feature>
<feature type="helix" evidence="6">
    <location>
        <begin position="56"/>
        <end position="66"/>
    </location>
</feature>
<feature type="strand" evidence="5">
    <location>
        <begin position="67"/>
        <end position="70"/>
    </location>
</feature>
<feature type="strand" evidence="6">
    <location>
        <begin position="73"/>
        <end position="76"/>
    </location>
</feature>
<feature type="strand" evidence="6">
    <location>
        <begin position="79"/>
        <end position="83"/>
    </location>
</feature>
<feature type="helix" evidence="6">
    <location>
        <begin position="84"/>
        <end position="92"/>
    </location>
</feature>
<feature type="helix" evidence="6">
    <location>
        <begin position="95"/>
        <end position="107"/>
    </location>
</feature>
<feature type="strand" evidence="5">
    <location>
        <begin position="108"/>
        <end position="110"/>
    </location>
</feature>
<comment type="function">
    <text evidence="4">Monothiol glutaredoxin involved in the biogenesis of iron-sulfur clusters.</text>
</comment>
<comment type="subunit">
    <text evidence="3">Homodimer.</text>
</comment>
<comment type="interaction">
    <interactant intactId="EBI-545828">
        <id>P0AC69</id>
    </interactant>
    <interactant intactId="EBI-545774">
        <id>P0ABE2</id>
        <label>bolA</label>
    </interactant>
    <organismsDiffer>false</organismsDiffer>
    <experiments>5</experiments>
</comment>
<comment type="interaction">
    <interactant intactId="EBI-545828">
        <id>P0AC69</id>
    </interactant>
    <interactant intactId="EBI-1131877">
        <id>P0A9W6</id>
        <label>ibaG</label>
    </interactant>
    <organismsDiffer>false</organismsDiffer>
    <experiments>4</experiments>
</comment>
<comment type="subcellular location">
    <subcellularLocation>
        <location evidence="2">Cytoplasm</location>
    </subcellularLocation>
</comment>
<comment type="similarity">
    <text evidence="4">Belongs to the glutaredoxin family. Monothiol subfamily.</text>
</comment>
<name>GLRX4_ECOLI</name>
<reference key="1">
    <citation type="journal article" date="1996" name="DNA Res.">
        <title>A 570-kb DNA sequence of the Escherichia coli K-12 genome corresponding to the 28.0-40.1 min region on the linkage map.</title>
        <authorList>
            <person name="Aiba H."/>
            <person name="Baba T."/>
            <person name="Fujita K."/>
            <person name="Hayashi K."/>
            <person name="Inada T."/>
            <person name="Isono K."/>
            <person name="Itoh T."/>
            <person name="Kasai H."/>
            <person name="Kashimoto K."/>
            <person name="Kimura S."/>
            <person name="Kitakawa M."/>
            <person name="Kitagawa M."/>
            <person name="Makino K."/>
            <person name="Miki T."/>
            <person name="Mizobuchi K."/>
            <person name="Mori H."/>
            <person name="Mori T."/>
            <person name="Motomura K."/>
            <person name="Nakade S."/>
            <person name="Nakamura Y."/>
            <person name="Nashimoto H."/>
            <person name="Nishio Y."/>
            <person name="Oshima T."/>
            <person name="Saito N."/>
            <person name="Sampei G."/>
            <person name="Seki Y."/>
            <person name="Sivasundaram S."/>
            <person name="Tagami H."/>
            <person name="Takeda J."/>
            <person name="Takemoto K."/>
            <person name="Takeuchi Y."/>
            <person name="Wada C."/>
            <person name="Yamamoto Y."/>
            <person name="Horiuchi T."/>
        </authorList>
    </citation>
    <scope>NUCLEOTIDE SEQUENCE [LARGE SCALE GENOMIC DNA]</scope>
    <source>
        <strain>K12 / W3110 / ATCC 27325 / DSM 5911</strain>
    </source>
</reference>
<reference key="2">
    <citation type="journal article" date="1997" name="Science">
        <title>The complete genome sequence of Escherichia coli K-12.</title>
        <authorList>
            <person name="Blattner F.R."/>
            <person name="Plunkett G. III"/>
            <person name="Bloch C.A."/>
            <person name="Perna N.T."/>
            <person name="Burland V."/>
            <person name="Riley M."/>
            <person name="Collado-Vides J."/>
            <person name="Glasner J.D."/>
            <person name="Rode C.K."/>
            <person name="Mayhew G.F."/>
            <person name="Gregor J."/>
            <person name="Davis N.W."/>
            <person name="Kirkpatrick H.A."/>
            <person name="Goeden M.A."/>
            <person name="Rose D.J."/>
            <person name="Mau B."/>
            <person name="Shao Y."/>
        </authorList>
    </citation>
    <scope>NUCLEOTIDE SEQUENCE [LARGE SCALE GENOMIC DNA]</scope>
    <source>
        <strain>K12 / MG1655 / ATCC 47076</strain>
    </source>
</reference>
<reference key="3">
    <citation type="journal article" date="2006" name="Mol. Syst. Biol.">
        <title>Highly accurate genome sequences of Escherichia coli K-12 strains MG1655 and W3110.</title>
        <authorList>
            <person name="Hayashi K."/>
            <person name="Morooka N."/>
            <person name="Yamamoto Y."/>
            <person name="Fujita K."/>
            <person name="Isono K."/>
            <person name="Choi S."/>
            <person name="Ohtsubo E."/>
            <person name="Baba T."/>
            <person name="Wanner B.L."/>
            <person name="Mori H."/>
            <person name="Horiuchi T."/>
        </authorList>
    </citation>
    <scope>NUCLEOTIDE SEQUENCE [LARGE SCALE GENOMIC DNA]</scope>
    <source>
        <strain>K12 / W3110 / ATCC 27325 / DSM 5911</strain>
    </source>
</reference>
<reference key="4">
    <citation type="journal article" date="1995" name="J. Bacteriol.">
        <title>The gene for the longest known Escherichia coli protein is a member of helicase superfamily II.</title>
        <authorList>
            <person name="Reuven N.B."/>
            <person name="Koonin E.V."/>
            <person name="Rudd K.E."/>
            <person name="Deutscher M.P."/>
        </authorList>
    </citation>
    <scope>NUCLEOTIDE SEQUENCE [GENOMIC DNA] OF 43-115</scope>
    <source>
        <strain>K12</strain>
    </source>
</reference>
<reference key="5">
    <citation type="journal article" date="2005" name="J. Biol. Chem.">
        <title>A novel monothiol glutaredoxin (Grx4) from Escherichia coli can serve as a substrate for thioredoxin reductase.</title>
        <authorList>
            <person name="Fernandes A.P."/>
            <person name="Fladvad M."/>
            <person name="Berndt C."/>
            <person name="Andresen C."/>
            <person name="Lillig C.H."/>
            <person name="Neubauer P."/>
            <person name="Sunnerhagen M."/>
            <person name="Holmgren A."/>
            <person name="Vlamis-Gardikas A."/>
        </authorList>
    </citation>
    <scope>CHARACTERIZATION</scope>
    <scope>SUBCELLULAR LOCATION</scope>
</reference>
<reference key="6">
    <citation type="journal article" date="2005" name="J. Biol. Chem.">
        <title>Molecular mapping of functionalities in the solution structure of reduced Grx4, a monothiol glutaredoxin from Escherichia coli.</title>
        <authorList>
            <person name="Fladvad M."/>
            <person name="Bellanda M."/>
            <person name="Fernandes A.P."/>
            <person name="Mammi S."/>
            <person name="Vlamis-Gardikas A."/>
            <person name="Holmgren A."/>
            <person name="Sunnerhagen M."/>
        </authorList>
    </citation>
    <scope>STRUCTURE BY NMR</scope>
</reference>
<reference key="7">
    <citation type="journal article" date="2009" name="Biochemistry">
        <title>Structural basis for delivery of the intact [Fe2S2] cluster by monothiol glutaredoxin.</title>
        <authorList>
            <person name="Iwema T."/>
            <person name="Picciocchi A."/>
            <person name="Traore D.A."/>
            <person name="Ferrer J.L."/>
            <person name="Chauvat F."/>
            <person name="Jacquamet L."/>
        </authorList>
    </citation>
    <scope>X-RAY CRYSTALLOGRAPHY (1.9 ANGSTROMS) IN COMPLEX WITH IRON-SULFUR CLUSTER AND GLUTATHIONE</scope>
    <scope>SUBUNIT</scope>
</reference>
<proteinExistence type="evidence at protein level"/>
<gene>
    <name type="primary">grxD</name>
    <name type="synonym">ydhD</name>
    <name type="ordered locus">b1654</name>
    <name type="ordered locus">JW1646</name>
</gene>
<dbReference type="EMBL" id="U00096">
    <property type="protein sequence ID" value="AAC74726.1"/>
    <property type="molecule type" value="Genomic_DNA"/>
</dbReference>
<dbReference type="EMBL" id="AP009048">
    <property type="protein sequence ID" value="BAA15420.1"/>
    <property type="molecule type" value="Genomic_DNA"/>
</dbReference>
<dbReference type="EMBL" id="L01622">
    <property type="protein sequence ID" value="AAC37010.1"/>
    <property type="molecule type" value="Genomic_DNA"/>
</dbReference>
<dbReference type="PIR" id="H64922">
    <property type="entry name" value="H64922"/>
</dbReference>
<dbReference type="RefSeq" id="NP_416171.1">
    <property type="nucleotide sequence ID" value="NC_000913.3"/>
</dbReference>
<dbReference type="RefSeq" id="WP_000108172.1">
    <property type="nucleotide sequence ID" value="NZ_STEB01000003.1"/>
</dbReference>
<dbReference type="PDB" id="1YKA">
    <property type="method" value="NMR"/>
    <property type="chains" value="A=1-115"/>
</dbReference>
<dbReference type="PDB" id="2WCI">
    <property type="method" value="X-ray"/>
    <property type="resolution" value="1.90 A"/>
    <property type="chains" value="A/B=1-115"/>
</dbReference>
<dbReference type="PDBsum" id="1YKA"/>
<dbReference type="PDBsum" id="2WCI"/>
<dbReference type="SMR" id="P0AC69"/>
<dbReference type="BioGRID" id="4260269">
    <property type="interactions" value="452"/>
</dbReference>
<dbReference type="ComplexPortal" id="CPX-2206">
    <property type="entry name" value="GRXD iron-sulfur cluster assembly homodimer complex"/>
</dbReference>
<dbReference type="ComplexPortal" id="CPX-5898">
    <property type="entry name" value="bolA-grxD iron-sulfur cluster assembly complex"/>
</dbReference>
<dbReference type="ComplexPortal" id="CPX-5899">
    <property type="entry name" value="ibaG-grxD iron-sulfur cluster assembly complex"/>
</dbReference>
<dbReference type="DIP" id="DIP-11729N"/>
<dbReference type="FunCoup" id="P0AC69">
    <property type="interactions" value="669"/>
</dbReference>
<dbReference type="IntAct" id="P0AC69">
    <property type="interactions" value="19"/>
</dbReference>
<dbReference type="STRING" id="511145.b1654"/>
<dbReference type="jPOST" id="P0AC69"/>
<dbReference type="PaxDb" id="511145-b1654"/>
<dbReference type="EnsemblBacteria" id="AAC74726">
    <property type="protein sequence ID" value="AAC74726"/>
    <property type="gene ID" value="b1654"/>
</dbReference>
<dbReference type="GeneID" id="89516419"/>
<dbReference type="GeneID" id="946169"/>
<dbReference type="KEGG" id="ecj:JW1646"/>
<dbReference type="KEGG" id="eco:b1654"/>
<dbReference type="KEGG" id="ecoc:C3026_09490"/>
<dbReference type="PATRIC" id="fig|1411691.4.peg.605"/>
<dbReference type="EchoBASE" id="EB2098"/>
<dbReference type="eggNOG" id="COG0278">
    <property type="taxonomic scope" value="Bacteria"/>
</dbReference>
<dbReference type="HOGENOM" id="CLU_026126_2_1_6"/>
<dbReference type="InParanoid" id="P0AC69"/>
<dbReference type="OMA" id="TKLMPQC"/>
<dbReference type="OrthoDB" id="9804115at2"/>
<dbReference type="PhylomeDB" id="P0AC69"/>
<dbReference type="BioCyc" id="EcoCyc:EG12181-MONOMER"/>
<dbReference type="EvolutionaryTrace" id="P0AC69"/>
<dbReference type="PRO" id="PR:P0AC69"/>
<dbReference type="Proteomes" id="UP000000625">
    <property type="component" value="Chromosome"/>
</dbReference>
<dbReference type="GO" id="GO:0005829">
    <property type="term" value="C:cytosol"/>
    <property type="evidence" value="ECO:0000314"/>
    <property type="project" value="EcoCyc"/>
</dbReference>
<dbReference type="GO" id="GO:1990229">
    <property type="term" value="C:iron-sulfur cluster assembly complex"/>
    <property type="evidence" value="ECO:0000353"/>
    <property type="project" value="ComplexPortal"/>
</dbReference>
<dbReference type="GO" id="GO:0051537">
    <property type="term" value="F:2 iron, 2 sulfur cluster binding"/>
    <property type="evidence" value="ECO:0000314"/>
    <property type="project" value="EcoCyc"/>
</dbReference>
<dbReference type="GO" id="GO:0015036">
    <property type="term" value="F:disulfide oxidoreductase activity"/>
    <property type="evidence" value="ECO:0007669"/>
    <property type="project" value="InterPro"/>
</dbReference>
<dbReference type="GO" id="GO:0046872">
    <property type="term" value="F:metal ion binding"/>
    <property type="evidence" value="ECO:0007669"/>
    <property type="project" value="UniProtKB-KW"/>
</dbReference>
<dbReference type="GO" id="GO:0042803">
    <property type="term" value="F:protein homodimerization activity"/>
    <property type="evidence" value="ECO:0000314"/>
    <property type="project" value="EcoCyc"/>
</dbReference>
<dbReference type="GO" id="GO:0045454">
    <property type="term" value="P:cell redox homeostasis"/>
    <property type="evidence" value="ECO:0000303"/>
    <property type="project" value="ComplexPortal"/>
</dbReference>
<dbReference type="GO" id="GO:0006879">
    <property type="term" value="P:intracellular iron ion homeostasis"/>
    <property type="evidence" value="ECO:0000303"/>
    <property type="project" value="ComplexPortal"/>
</dbReference>
<dbReference type="GO" id="GO:0016226">
    <property type="term" value="P:iron-sulfur cluster assembly"/>
    <property type="evidence" value="ECO:0000303"/>
    <property type="project" value="ComplexPortal"/>
</dbReference>
<dbReference type="CDD" id="cd03028">
    <property type="entry name" value="GRX_PICOT_like"/>
    <property type="match status" value="1"/>
</dbReference>
<dbReference type="FunFam" id="3.40.30.10:FF:000006">
    <property type="entry name" value="Glutaredoxin"/>
    <property type="match status" value="1"/>
</dbReference>
<dbReference type="Gene3D" id="3.40.30.10">
    <property type="entry name" value="Glutaredoxin"/>
    <property type="match status" value="1"/>
</dbReference>
<dbReference type="InterPro" id="IPR002109">
    <property type="entry name" value="Glutaredoxin"/>
</dbReference>
<dbReference type="InterPro" id="IPR033658">
    <property type="entry name" value="GRX_PICOT-like"/>
</dbReference>
<dbReference type="InterPro" id="IPR014434">
    <property type="entry name" value="Monothiol_GRX"/>
</dbReference>
<dbReference type="InterPro" id="IPR004480">
    <property type="entry name" value="Monothiol_GRX-rel"/>
</dbReference>
<dbReference type="InterPro" id="IPR036249">
    <property type="entry name" value="Thioredoxin-like_sf"/>
</dbReference>
<dbReference type="NCBIfam" id="TIGR00365">
    <property type="entry name" value="Grx4 family monothiol glutaredoxin"/>
    <property type="match status" value="1"/>
</dbReference>
<dbReference type="NCBIfam" id="NF008086">
    <property type="entry name" value="PRK10824.1"/>
    <property type="match status" value="1"/>
</dbReference>
<dbReference type="PANTHER" id="PTHR10293">
    <property type="entry name" value="GLUTAREDOXIN FAMILY MEMBER"/>
    <property type="match status" value="1"/>
</dbReference>
<dbReference type="PANTHER" id="PTHR10293:SF72">
    <property type="entry name" value="MONOTHIOL GLUTAREDOXIN-S14, CHLOROPLASTIC"/>
    <property type="match status" value="1"/>
</dbReference>
<dbReference type="Pfam" id="PF00462">
    <property type="entry name" value="Glutaredoxin"/>
    <property type="match status" value="1"/>
</dbReference>
<dbReference type="PIRSF" id="PIRSF005894">
    <property type="entry name" value="Monothiol_GRX"/>
    <property type="match status" value="1"/>
</dbReference>
<dbReference type="SUPFAM" id="SSF52833">
    <property type="entry name" value="Thioredoxin-like"/>
    <property type="match status" value="1"/>
</dbReference>
<dbReference type="PROSITE" id="PS51354">
    <property type="entry name" value="GLUTAREDOXIN_2"/>
    <property type="match status" value="1"/>
</dbReference>
<protein>
    <recommendedName>
        <fullName>Glutaredoxin 4</fullName>
        <shortName>Grx4</shortName>
    </recommendedName>
    <alternativeName>
        <fullName>Monothiol glutaredoxin</fullName>
    </alternativeName>
</protein>
<organism>
    <name type="scientific">Escherichia coli (strain K12)</name>
    <dbReference type="NCBI Taxonomy" id="83333"/>
    <lineage>
        <taxon>Bacteria</taxon>
        <taxon>Pseudomonadati</taxon>
        <taxon>Pseudomonadota</taxon>
        <taxon>Gammaproteobacteria</taxon>
        <taxon>Enterobacterales</taxon>
        <taxon>Enterobacteriaceae</taxon>
        <taxon>Escherichia</taxon>
    </lineage>
</organism>
<accession>P0AC69</accession>
<accession>P37010</accession>
<accession>P77424</accession>
<sequence>MSTTIEKIQRQIAENPILLYMKGSPKLPSCGFSAQAVQALAACGERFAYVDILQNPDIRAELPKYANWPTFPQLWVDGELVGGCDIVIEMYQRGELQQLIKETAAKYKSEEPDAE</sequence>